<proteinExistence type="evidence at protein level"/>
<accession>P31727</accession>
<reference key="1">
    <citation type="journal article" date="1989" name="Biochemistry">
        <title>Molecular cloning of cDNA for sarcocystatin A and analysis of the expression of the sarcocystatin A gene during development of Sarcophaga peregrina.</title>
        <authorList>
            <person name="Saito H."/>
            <person name="Suzuki T."/>
            <person name="Ueno K."/>
            <person name="Kubo T."/>
            <person name="Natori S."/>
        </authorList>
    </citation>
    <scope>NUCLEOTIDE SEQUENCE [MRNA]</scope>
    <scope>PROTEIN SEQUENCE OF 22-27 AND 61-86</scope>
    <scope>PYROGLUTAMATE FORMATION AT GLN-21</scope>
    <source>
        <tissue>Hemolymph</tissue>
    </source>
</reference>
<feature type="signal peptide">
    <location>
        <begin position="1"/>
        <end position="20"/>
    </location>
</feature>
<feature type="chain" id="PRO_0000006670" description="Sarcocystatin-A">
    <location>
        <begin position="21"/>
        <end position="122"/>
    </location>
</feature>
<feature type="short sequence motif" description="Secondary area of contact" evidence="1">
    <location>
        <begin position="67"/>
        <end position="71"/>
    </location>
</feature>
<feature type="site" description="Reactive site" evidence="1">
    <location>
        <position position="24"/>
    </location>
</feature>
<feature type="modified residue" description="Pyrrolidone carboxylic acid" evidence="2">
    <location>
        <position position="21"/>
    </location>
</feature>
<sequence>MKYVLILCVITLATVAYAQPQCVGCPSEVKGDKLKQSEETLNKSLSKLAAGDGPTYKLVKINSATTQVVSGSKDVINADLKDENDKTKTCDITIWSQPWLENGIEVTFNCPGEPKVVKKHSA</sequence>
<protein>
    <recommendedName>
        <fullName>Sarcocystatin-A</fullName>
    </recommendedName>
</protein>
<name>CYTA_SARPE</name>
<organism>
    <name type="scientific">Sarcophaga peregrina</name>
    <name type="common">Flesh fly</name>
    <name type="synonym">Boettcherisca peregrina</name>
    <dbReference type="NCBI Taxonomy" id="7386"/>
    <lineage>
        <taxon>Eukaryota</taxon>
        <taxon>Metazoa</taxon>
        <taxon>Ecdysozoa</taxon>
        <taxon>Arthropoda</taxon>
        <taxon>Hexapoda</taxon>
        <taxon>Insecta</taxon>
        <taxon>Pterygota</taxon>
        <taxon>Neoptera</taxon>
        <taxon>Endopterygota</taxon>
        <taxon>Diptera</taxon>
        <taxon>Brachycera</taxon>
        <taxon>Muscomorpha</taxon>
        <taxon>Oestroidea</taxon>
        <taxon>Sarcophagidae</taxon>
        <taxon>Sarcophaga</taxon>
        <taxon>Boettcherisca</taxon>
    </lineage>
</organism>
<dbReference type="EMBL" id="J02847">
    <property type="protein sequence ID" value="AAA29985.1"/>
    <property type="molecule type" value="mRNA"/>
</dbReference>
<dbReference type="PIR" id="A43644">
    <property type="entry name" value="A43644"/>
</dbReference>
<dbReference type="SMR" id="P31727"/>
<dbReference type="MEROPS" id="I25.013"/>
<dbReference type="GO" id="GO:0004869">
    <property type="term" value="F:cysteine-type endopeptidase inhibitor activity"/>
    <property type="evidence" value="ECO:0007669"/>
    <property type="project" value="UniProtKB-KW"/>
</dbReference>
<dbReference type="CDD" id="cd00042">
    <property type="entry name" value="CY"/>
    <property type="match status" value="1"/>
</dbReference>
<dbReference type="Gene3D" id="3.10.450.10">
    <property type="match status" value="1"/>
</dbReference>
<dbReference type="InterPro" id="IPR053128">
    <property type="entry name" value="Cystatin-like"/>
</dbReference>
<dbReference type="InterPro" id="IPR000010">
    <property type="entry name" value="Cystatin_dom"/>
</dbReference>
<dbReference type="InterPro" id="IPR046350">
    <property type="entry name" value="Cystatin_sf"/>
</dbReference>
<dbReference type="InterPro" id="IPR018073">
    <property type="entry name" value="Prot_inh_cystat_CS"/>
</dbReference>
<dbReference type="PANTHER" id="PTHR12319:SF2">
    <property type="entry name" value="CYSTATIN-LIKE PROTEIN-RELATED"/>
    <property type="match status" value="1"/>
</dbReference>
<dbReference type="PANTHER" id="PTHR12319">
    <property type="entry name" value="CYSTATIN-RELATED"/>
    <property type="match status" value="1"/>
</dbReference>
<dbReference type="Pfam" id="PF00031">
    <property type="entry name" value="Cystatin"/>
    <property type="match status" value="1"/>
</dbReference>
<dbReference type="SMART" id="SM00043">
    <property type="entry name" value="CY"/>
    <property type="match status" value="1"/>
</dbReference>
<dbReference type="SUPFAM" id="SSF54403">
    <property type="entry name" value="Cystatin/monellin"/>
    <property type="match status" value="1"/>
</dbReference>
<dbReference type="PROSITE" id="PS00287">
    <property type="entry name" value="CYSTATIN"/>
    <property type="match status" value="1"/>
</dbReference>
<evidence type="ECO:0000250" key="1"/>
<evidence type="ECO:0000269" key="2">
    <source>
    </source>
</evidence>
<evidence type="ECO:0000305" key="3"/>
<keyword id="KW-0903">Direct protein sequencing</keyword>
<keyword id="KW-0646">Protease inhibitor</keyword>
<keyword id="KW-0873">Pyrrolidone carboxylic acid</keyword>
<keyword id="KW-0732">Signal</keyword>
<keyword id="KW-0789">Thiol protease inhibitor</keyword>
<comment type="function">
    <text>Selectively inhibits the activity of cysteine proteinase of hemocytes, protecting developing adult tissue in pupae from attack by the proteinase.</text>
</comment>
<comment type="developmental stage">
    <text>Expressed at very early embryogenic stage and in the pupal stage.</text>
</comment>
<comment type="similarity">
    <text evidence="3">Belongs to the cystatin family.</text>
</comment>